<gene>
    <name type="ordered locus">sll0415</name>
</gene>
<proteinExistence type="inferred from homology"/>
<sequence length="354" mass="39501">MRFRCYLIFSIFSDSLLGAGFFQGGKRAMVVSTPIAAEEKPPIQANVVETWEISKIYRTGFWMNQKVESLKPLSIAVQQGETFGLLGPNGAGKTTLLKILLGVIRASGGRGTLLGKPIGDRQTKQRVGYLPENAYFYDFLTAWEFLDYIGSLFQIGKQERQRRILAMCDLVGLAQKTAKKKQLRQYSKGMLQRVGMAQALINDPEVVFLDEPMSGLDPLGRYQVREIILSLKEQGKTIFFNSHILADVEQICDRIAILARGELLCSGSLAEVLGNDEGYEVVLKGGEEEALGKYLANLSQEQDVWHGHYQGDVQALVDALPSLNARLISMNLARPSLEDYFIRQLRERGITTSQ</sequence>
<feature type="chain" id="PRO_0000093285" description="Uncharacterized ABC transporter ATP-binding protein sll0415">
    <location>
        <begin position="1"/>
        <end position="354"/>
    </location>
</feature>
<feature type="domain" description="ABC transporter" evidence="1">
    <location>
        <begin position="48"/>
        <end position="285"/>
    </location>
</feature>
<feature type="binding site" evidence="1">
    <location>
        <begin position="87"/>
        <end position="94"/>
    </location>
    <ligand>
        <name>ATP</name>
        <dbReference type="ChEBI" id="CHEBI:30616"/>
    </ligand>
</feature>
<feature type="sequence conflict" description="In Ref. 1; AAA27283." evidence="2" ref="1">
    <original>LGRYQVREIILSLKEQGKTIFFNSHILADV</original>
    <variation>WGATKCGKLFFPSRNRAKPSFSTPTFWRTL</variation>
    <location>
        <begin position="219"/>
        <end position="248"/>
    </location>
</feature>
<reference key="1">
    <citation type="journal article" date="1991" name="J. Biol. Chem.">
        <title>Molecular cloning of the genes encoding two chaperone proteins of the cyanobacterium Synechocystis sp. PCC 6803.</title>
        <authorList>
            <person name="Chitnis P.R."/>
            <person name="Nelson N."/>
        </authorList>
    </citation>
    <scope>NUCLEOTIDE SEQUENCE [GENOMIC DNA]</scope>
</reference>
<reference key="2">
    <citation type="journal article" date="1995" name="DNA Res.">
        <title>Sequence analysis of the genome of the unicellular cyanobacterium Synechocystis sp. strain PCC6803. I. Sequence features in the 1 Mb region from map positions 64% to 92% of the genome.</title>
        <authorList>
            <person name="Kaneko T."/>
            <person name="Tanaka A."/>
            <person name="Sato S."/>
            <person name="Kotani H."/>
            <person name="Sazuka T."/>
            <person name="Miyajima N."/>
            <person name="Sugiura M."/>
            <person name="Tabata S."/>
        </authorList>
    </citation>
    <scope>NUCLEOTIDE SEQUENCE [LARGE SCALE GENOMIC DNA]</scope>
    <source>
        <strain>ATCC 27184 / PCC 6803 / N-1</strain>
    </source>
</reference>
<reference key="3">
    <citation type="journal article" date="1996" name="DNA Res.">
        <title>Sequence analysis of the genome of the unicellular cyanobacterium Synechocystis sp. strain PCC6803. II. Sequence determination of the entire genome and assignment of potential protein-coding regions.</title>
        <authorList>
            <person name="Kaneko T."/>
            <person name="Sato S."/>
            <person name="Kotani H."/>
            <person name="Tanaka A."/>
            <person name="Asamizu E."/>
            <person name="Nakamura Y."/>
            <person name="Miyajima N."/>
            <person name="Hirosawa M."/>
            <person name="Sugiura M."/>
            <person name="Sasamoto S."/>
            <person name="Kimura T."/>
            <person name="Hosouchi T."/>
            <person name="Matsuno A."/>
            <person name="Muraki A."/>
            <person name="Nakazaki N."/>
            <person name="Naruo K."/>
            <person name="Okumura S."/>
            <person name="Shimpo S."/>
            <person name="Takeuchi C."/>
            <person name="Wada T."/>
            <person name="Watanabe A."/>
            <person name="Yamada M."/>
            <person name="Yasuda M."/>
            <person name="Tabata S."/>
        </authorList>
    </citation>
    <scope>NUCLEOTIDE SEQUENCE [LARGE SCALE GENOMIC DNA]</scope>
    <source>
        <strain>ATCC 27184 / PCC 6803 / Kazusa</strain>
    </source>
</reference>
<organism>
    <name type="scientific">Synechocystis sp. (strain ATCC 27184 / PCC 6803 / Kazusa)</name>
    <dbReference type="NCBI Taxonomy" id="1111708"/>
    <lineage>
        <taxon>Bacteria</taxon>
        <taxon>Bacillati</taxon>
        <taxon>Cyanobacteriota</taxon>
        <taxon>Cyanophyceae</taxon>
        <taxon>Synechococcales</taxon>
        <taxon>Merismopediaceae</taxon>
        <taxon>Synechocystis</taxon>
    </lineage>
</organism>
<keyword id="KW-0067">ATP-binding</keyword>
<keyword id="KW-0547">Nucleotide-binding</keyword>
<keyword id="KW-1185">Reference proteome</keyword>
<keyword id="KW-0813">Transport</keyword>
<evidence type="ECO:0000255" key="1">
    <source>
        <dbReference type="PROSITE-ProRule" id="PRU00434"/>
    </source>
</evidence>
<evidence type="ECO:0000305" key="2"/>
<comment type="similarity">
    <text evidence="2">Belongs to the ABC transporter superfamily.</text>
</comment>
<accession>P22040</accession>
<accession>Q55111</accession>
<name>Y415_SYNY3</name>
<dbReference type="EMBL" id="M57517">
    <property type="protein sequence ID" value="AAA27283.1"/>
    <property type="molecule type" value="Genomic_DNA"/>
</dbReference>
<dbReference type="EMBL" id="BA000022">
    <property type="protein sequence ID" value="BAA10241.1"/>
    <property type="molecule type" value="Genomic_DNA"/>
</dbReference>
<dbReference type="PIR" id="S74323">
    <property type="entry name" value="S74323"/>
</dbReference>
<dbReference type="SMR" id="P22040"/>
<dbReference type="FunCoup" id="P22040">
    <property type="interactions" value="169"/>
</dbReference>
<dbReference type="IntAct" id="P22040">
    <property type="interactions" value="2"/>
</dbReference>
<dbReference type="STRING" id="1148.gene:10499740"/>
<dbReference type="PaxDb" id="1148-1001104"/>
<dbReference type="EnsemblBacteria" id="BAA10241">
    <property type="protein sequence ID" value="BAA10241"/>
    <property type="gene ID" value="BAA10241"/>
</dbReference>
<dbReference type="KEGG" id="syn:sll0415"/>
<dbReference type="eggNOG" id="COG1131">
    <property type="taxonomic scope" value="Bacteria"/>
</dbReference>
<dbReference type="InParanoid" id="P22040"/>
<dbReference type="PhylomeDB" id="P22040"/>
<dbReference type="Proteomes" id="UP000001425">
    <property type="component" value="Chromosome"/>
</dbReference>
<dbReference type="GO" id="GO:0005524">
    <property type="term" value="F:ATP binding"/>
    <property type="evidence" value="ECO:0007669"/>
    <property type="project" value="UniProtKB-KW"/>
</dbReference>
<dbReference type="GO" id="GO:0016887">
    <property type="term" value="F:ATP hydrolysis activity"/>
    <property type="evidence" value="ECO:0007669"/>
    <property type="project" value="InterPro"/>
</dbReference>
<dbReference type="CDD" id="cd03230">
    <property type="entry name" value="ABC_DR_subfamily_A"/>
    <property type="match status" value="1"/>
</dbReference>
<dbReference type="Gene3D" id="3.40.50.300">
    <property type="entry name" value="P-loop containing nucleotide triphosphate hydrolases"/>
    <property type="match status" value="1"/>
</dbReference>
<dbReference type="InterPro" id="IPR003593">
    <property type="entry name" value="AAA+_ATPase"/>
</dbReference>
<dbReference type="InterPro" id="IPR003439">
    <property type="entry name" value="ABC_transporter-like_ATP-bd"/>
</dbReference>
<dbReference type="InterPro" id="IPR017871">
    <property type="entry name" value="ABC_transporter-like_CS"/>
</dbReference>
<dbReference type="InterPro" id="IPR051782">
    <property type="entry name" value="ABC_Transporter_VariousFunc"/>
</dbReference>
<dbReference type="InterPro" id="IPR027417">
    <property type="entry name" value="P-loop_NTPase"/>
</dbReference>
<dbReference type="PANTHER" id="PTHR42939">
    <property type="entry name" value="ABC TRANSPORTER ATP-BINDING PROTEIN ALBC-RELATED"/>
    <property type="match status" value="1"/>
</dbReference>
<dbReference type="PANTHER" id="PTHR42939:SF1">
    <property type="entry name" value="ABC TRANSPORTER ATP-BINDING PROTEIN ALBC-RELATED"/>
    <property type="match status" value="1"/>
</dbReference>
<dbReference type="Pfam" id="PF00005">
    <property type="entry name" value="ABC_tran"/>
    <property type="match status" value="1"/>
</dbReference>
<dbReference type="SMART" id="SM00382">
    <property type="entry name" value="AAA"/>
    <property type="match status" value="1"/>
</dbReference>
<dbReference type="SUPFAM" id="SSF52540">
    <property type="entry name" value="P-loop containing nucleoside triphosphate hydrolases"/>
    <property type="match status" value="1"/>
</dbReference>
<dbReference type="PROSITE" id="PS00211">
    <property type="entry name" value="ABC_TRANSPORTER_1"/>
    <property type="match status" value="1"/>
</dbReference>
<dbReference type="PROSITE" id="PS50893">
    <property type="entry name" value="ABC_TRANSPORTER_2"/>
    <property type="match status" value="1"/>
</dbReference>
<protein>
    <recommendedName>
        <fullName>Uncharacterized ABC transporter ATP-binding protein sll0415</fullName>
    </recommendedName>
</protein>